<accession>A3QJS1</accession>
<reference key="1">
    <citation type="submission" date="2007-03" db="EMBL/GenBank/DDBJ databases">
        <title>Complete sequence of Shewanella loihica PV-4.</title>
        <authorList>
            <consortium name="US DOE Joint Genome Institute"/>
            <person name="Copeland A."/>
            <person name="Lucas S."/>
            <person name="Lapidus A."/>
            <person name="Barry K."/>
            <person name="Detter J.C."/>
            <person name="Glavina del Rio T."/>
            <person name="Hammon N."/>
            <person name="Israni S."/>
            <person name="Dalin E."/>
            <person name="Tice H."/>
            <person name="Pitluck S."/>
            <person name="Chain P."/>
            <person name="Malfatti S."/>
            <person name="Shin M."/>
            <person name="Vergez L."/>
            <person name="Schmutz J."/>
            <person name="Larimer F."/>
            <person name="Land M."/>
            <person name="Hauser L."/>
            <person name="Kyrpides N."/>
            <person name="Mikhailova N."/>
            <person name="Romine M.F."/>
            <person name="Serres G."/>
            <person name="Fredrickson J."/>
            <person name="Tiedje J."/>
            <person name="Richardson P."/>
        </authorList>
    </citation>
    <scope>NUCLEOTIDE SEQUENCE [LARGE SCALE GENOMIC DNA]</scope>
    <source>
        <strain>ATCC BAA-1088 / PV-4</strain>
    </source>
</reference>
<evidence type="ECO:0000255" key="1">
    <source>
        <dbReference type="HAMAP-Rule" id="MF_00129"/>
    </source>
</evidence>
<organism>
    <name type="scientific">Shewanella loihica (strain ATCC BAA-1088 / PV-4)</name>
    <dbReference type="NCBI Taxonomy" id="323850"/>
    <lineage>
        <taxon>Bacteria</taxon>
        <taxon>Pseudomonadati</taxon>
        <taxon>Pseudomonadota</taxon>
        <taxon>Gammaproteobacteria</taxon>
        <taxon>Alteromonadales</taxon>
        <taxon>Shewanellaceae</taxon>
        <taxon>Shewanella</taxon>
    </lineage>
</organism>
<name>MNMG_SHELP</name>
<proteinExistence type="inferred from homology"/>
<comment type="function">
    <text evidence="1">NAD-binding protein involved in the addition of a carboxymethylaminomethyl (cmnm) group at the wobble position (U34) of certain tRNAs, forming tRNA-cmnm(5)s(2)U34.</text>
</comment>
<comment type="cofactor">
    <cofactor evidence="1">
        <name>FAD</name>
        <dbReference type="ChEBI" id="CHEBI:57692"/>
    </cofactor>
</comment>
<comment type="subunit">
    <text evidence="1">Homodimer. Heterotetramer of two MnmE and two MnmG subunits.</text>
</comment>
<comment type="subcellular location">
    <subcellularLocation>
        <location evidence="1">Cytoplasm</location>
    </subcellularLocation>
</comment>
<comment type="similarity">
    <text evidence="1">Belongs to the MnmG family.</text>
</comment>
<sequence length="629" mass="69414">MHFHERFDVIVVGGGHAGTEAALASARMGSKTLLLTHNIDTLGQMSCNPAIGGIGKGHLVKEIDALGGAMAVATDHAGIQFRTLNSSKGPAVRATRAQADRALYRAKIQQILQNQPNLRLFQQAVDDLIVGNDRVIGVVTQMGLAFEAPAIVLTAGTFLSGKIHIGLENYSGGRAGDPPSISLADRLRELPIRVGRLKTGTPPRIDANTINFDLMTEQKGDDPLPVMSFIGDVKDHPKQISCFITHTNERTHDIIRGGLDRSPMYSGVIEGIGPRYCPSIEDKINRFADKSSHQIFIEPEGLNTNEIYPNGISTSLPFDVQLNLVRSIQGMENAEIIRPGYAIEYDYFDPRDLKNSLETKAISGLFFAGQINGTTGYEEAGAQGLLAGMNASLQVQGKEAWCPRRDEAYLGVLVDDLSTLGTKEPYRMFTSRAEYRLLLREDNADLRLTEKGRELGLVDDDRWAKFNAKREAIELELQRLRSQWIHPNSPLVDALNPHLNTPITREATFEELLRRPELDYPKLMSVEGFGPAIEDQRAAEQVQIQVKYSGYIQRQQDEIDKAIRHEKTGLPQDLDYQEVPGLSNEVIAKLNDHKPDTVGQASRISGITPAAISILLVHLKKRGLLRKSA</sequence>
<gene>
    <name evidence="1" type="primary">mnmG</name>
    <name evidence="1" type="synonym">gidA</name>
    <name type="ordered locus">Shew_3856</name>
</gene>
<protein>
    <recommendedName>
        <fullName evidence="1">tRNA uridine 5-carboxymethylaminomethyl modification enzyme MnmG</fullName>
    </recommendedName>
    <alternativeName>
        <fullName evidence="1">Glucose-inhibited division protein A</fullName>
    </alternativeName>
</protein>
<feature type="chain" id="PRO_1000016673" description="tRNA uridine 5-carboxymethylaminomethyl modification enzyme MnmG">
    <location>
        <begin position="1"/>
        <end position="629"/>
    </location>
</feature>
<feature type="binding site" evidence="1">
    <location>
        <begin position="13"/>
        <end position="18"/>
    </location>
    <ligand>
        <name>FAD</name>
        <dbReference type="ChEBI" id="CHEBI:57692"/>
    </ligand>
</feature>
<feature type="binding site" evidence="1">
    <location>
        <position position="125"/>
    </location>
    <ligand>
        <name>FAD</name>
        <dbReference type="ChEBI" id="CHEBI:57692"/>
    </ligand>
</feature>
<feature type="binding site" evidence="1">
    <location>
        <position position="180"/>
    </location>
    <ligand>
        <name>FAD</name>
        <dbReference type="ChEBI" id="CHEBI:57692"/>
    </ligand>
</feature>
<feature type="binding site" evidence="1">
    <location>
        <begin position="273"/>
        <end position="287"/>
    </location>
    <ligand>
        <name>NAD(+)</name>
        <dbReference type="ChEBI" id="CHEBI:57540"/>
    </ligand>
</feature>
<feature type="binding site" evidence="1">
    <location>
        <position position="370"/>
    </location>
    <ligand>
        <name>FAD</name>
        <dbReference type="ChEBI" id="CHEBI:57692"/>
    </ligand>
</feature>
<keyword id="KW-0963">Cytoplasm</keyword>
<keyword id="KW-0274">FAD</keyword>
<keyword id="KW-0285">Flavoprotein</keyword>
<keyword id="KW-0520">NAD</keyword>
<keyword id="KW-1185">Reference proteome</keyword>
<keyword id="KW-0819">tRNA processing</keyword>
<dbReference type="EMBL" id="CP000606">
    <property type="protein sequence ID" value="ABO25719.1"/>
    <property type="molecule type" value="Genomic_DNA"/>
</dbReference>
<dbReference type="RefSeq" id="WP_011867646.1">
    <property type="nucleotide sequence ID" value="NC_009092.1"/>
</dbReference>
<dbReference type="SMR" id="A3QJS1"/>
<dbReference type="STRING" id="323850.Shew_3856"/>
<dbReference type="KEGG" id="slo:Shew_3856"/>
<dbReference type="eggNOG" id="COG0445">
    <property type="taxonomic scope" value="Bacteria"/>
</dbReference>
<dbReference type="HOGENOM" id="CLU_007831_2_2_6"/>
<dbReference type="OrthoDB" id="9815560at2"/>
<dbReference type="Proteomes" id="UP000001558">
    <property type="component" value="Chromosome"/>
</dbReference>
<dbReference type="GO" id="GO:0005829">
    <property type="term" value="C:cytosol"/>
    <property type="evidence" value="ECO:0007669"/>
    <property type="project" value="TreeGrafter"/>
</dbReference>
<dbReference type="GO" id="GO:0050660">
    <property type="term" value="F:flavin adenine dinucleotide binding"/>
    <property type="evidence" value="ECO:0007669"/>
    <property type="project" value="UniProtKB-UniRule"/>
</dbReference>
<dbReference type="GO" id="GO:0030488">
    <property type="term" value="P:tRNA methylation"/>
    <property type="evidence" value="ECO:0007669"/>
    <property type="project" value="TreeGrafter"/>
</dbReference>
<dbReference type="GO" id="GO:0002098">
    <property type="term" value="P:tRNA wobble uridine modification"/>
    <property type="evidence" value="ECO:0007669"/>
    <property type="project" value="InterPro"/>
</dbReference>
<dbReference type="FunFam" id="1.10.10.1800:FF:000001">
    <property type="entry name" value="tRNA uridine 5-carboxymethylaminomethyl modification enzyme MnmG"/>
    <property type="match status" value="1"/>
</dbReference>
<dbReference type="FunFam" id="1.10.150.570:FF:000001">
    <property type="entry name" value="tRNA uridine 5-carboxymethylaminomethyl modification enzyme MnmG"/>
    <property type="match status" value="1"/>
</dbReference>
<dbReference type="FunFam" id="3.50.50.60:FF:000002">
    <property type="entry name" value="tRNA uridine 5-carboxymethylaminomethyl modification enzyme MnmG"/>
    <property type="match status" value="1"/>
</dbReference>
<dbReference type="FunFam" id="3.50.50.60:FF:000010">
    <property type="entry name" value="tRNA uridine 5-carboxymethylaminomethyl modification enzyme MnmG"/>
    <property type="match status" value="1"/>
</dbReference>
<dbReference type="Gene3D" id="3.50.50.60">
    <property type="entry name" value="FAD/NAD(P)-binding domain"/>
    <property type="match status" value="2"/>
</dbReference>
<dbReference type="Gene3D" id="1.10.150.570">
    <property type="entry name" value="GidA associated domain, C-terminal subdomain"/>
    <property type="match status" value="1"/>
</dbReference>
<dbReference type="Gene3D" id="1.10.10.1800">
    <property type="entry name" value="tRNA uridine 5-carboxymethylaminomethyl modification enzyme MnmG/GidA"/>
    <property type="match status" value="1"/>
</dbReference>
<dbReference type="HAMAP" id="MF_00129">
    <property type="entry name" value="MnmG_GidA"/>
    <property type="match status" value="1"/>
</dbReference>
<dbReference type="InterPro" id="IPR036188">
    <property type="entry name" value="FAD/NAD-bd_sf"/>
</dbReference>
<dbReference type="InterPro" id="IPR049312">
    <property type="entry name" value="GIDA_C_N"/>
</dbReference>
<dbReference type="InterPro" id="IPR004416">
    <property type="entry name" value="MnmG"/>
</dbReference>
<dbReference type="InterPro" id="IPR002218">
    <property type="entry name" value="MnmG-rel"/>
</dbReference>
<dbReference type="InterPro" id="IPR020595">
    <property type="entry name" value="MnmG-rel_CS"/>
</dbReference>
<dbReference type="InterPro" id="IPR026904">
    <property type="entry name" value="MnmG_C"/>
</dbReference>
<dbReference type="InterPro" id="IPR047001">
    <property type="entry name" value="MnmG_C_subdom"/>
</dbReference>
<dbReference type="InterPro" id="IPR044920">
    <property type="entry name" value="MnmG_C_subdom_sf"/>
</dbReference>
<dbReference type="InterPro" id="IPR040131">
    <property type="entry name" value="MnmG_N"/>
</dbReference>
<dbReference type="NCBIfam" id="TIGR00136">
    <property type="entry name" value="mnmG_gidA"/>
    <property type="match status" value="1"/>
</dbReference>
<dbReference type="PANTHER" id="PTHR11806">
    <property type="entry name" value="GLUCOSE INHIBITED DIVISION PROTEIN A"/>
    <property type="match status" value="1"/>
</dbReference>
<dbReference type="PANTHER" id="PTHR11806:SF0">
    <property type="entry name" value="PROTEIN MTO1 HOMOLOG, MITOCHONDRIAL"/>
    <property type="match status" value="1"/>
</dbReference>
<dbReference type="Pfam" id="PF01134">
    <property type="entry name" value="GIDA"/>
    <property type="match status" value="1"/>
</dbReference>
<dbReference type="Pfam" id="PF21680">
    <property type="entry name" value="GIDA_C_1st"/>
    <property type="match status" value="1"/>
</dbReference>
<dbReference type="Pfam" id="PF13932">
    <property type="entry name" value="SAM_GIDA_C"/>
    <property type="match status" value="1"/>
</dbReference>
<dbReference type="SMART" id="SM01228">
    <property type="entry name" value="GIDA_assoc_3"/>
    <property type="match status" value="1"/>
</dbReference>
<dbReference type="SUPFAM" id="SSF51905">
    <property type="entry name" value="FAD/NAD(P)-binding domain"/>
    <property type="match status" value="1"/>
</dbReference>
<dbReference type="PROSITE" id="PS01280">
    <property type="entry name" value="GIDA_1"/>
    <property type="match status" value="1"/>
</dbReference>
<dbReference type="PROSITE" id="PS01281">
    <property type="entry name" value="GIDA_2"/>
    <property type="match status" value="1"/>
</dbReference>